<reference key="1">
    <citation type="journal article" date="1984" name="Comp. Biochem. Physiol.">
        <title>Copper and zinc superoxide dismutase from the liver of bullfrog Rana catesbeiana.</title>
        <authorList>
            <person name="Abe Y."/>
            <person name="Okazaki T."/>
            <person name="Shukuya R."/>
            <person name="Furuta H."/>
        </authorList>
    </citation>
    <scope>PROTEIN SEQUENCE</scope>
    <source>
        <tissue>Liver</tissue>
    </source>
</reference>
<dbReference type="EC" id="1.15.1.1"/>
<dbReference type="PIR" id="S10618">
    <property type="entry name" value="S10618"/>
</dbReference>
<dbReference type="GO" id="GO:0005737">
    <property type="term" value="C:cytoplasm"/>
    <property type="evidence" value="ECO:0007669"/>
    <property type="project" value="UniProtKB-SubCell"/>
</dbReference>
<dbReference type="GO" id="GO:0046872">
    <property type="term" value="F:metal ion binding"/>
    <property type="evidence" value="ECO:0007669"/>
    <property type="project" value="UniProtKB-KW"/>
</dbReference>
<dbReference type="GO" id="GO:0004784">
    <property type="term" value="F:superoxide dismutase activity"/>
    <property type="evidence" value="ECO:0007669"/>
    <property type="project" value="UniProtKB-EC"/>
</dbReference>
<gene>
    <name type="primary">sod1</name>
</gene>
<name>SODC_AQUCT</name>
<proteinExistence type="evidence at protein level"/>
<sequence length="24" mass="2646">MKAIAVLKGXSEVTGVVRFEQQED</sequence>
<protein>
    <recommendedName>
        <fullName>Superoxide dismutase [Cu-Zn]</fullName>
        <ecNumber>1.15.1.1</ecNumber>
    </recommendedName>
</protein>
<feature type="chain" id="PRO_0000164075" description="Superoxide dismutase [Cu-Zn]">
    <location>
        <begin position="1"/>
        <end position="24" status="greater than"/>
    </location>
</feature>
<feature type="non-terminal residue">
    <location>
        <position position="24"/>
    </location>
</feature>
<keyword id="KW-0049">Antioxidant</keyword>
<keyword id="KW-0186">Copper</keyword>
<keyword id="KW-0963">Cytoplasm</keyword>
<keyword id="KW-0903">Direct protein sequencing</keyword>
<keyword id="KW-0479">Metal-binding</keyword>
<keyword id="KW-0560">Oxidoreductase</keyword>
<keyword id="KW-0862">Zinc</keyword>
<comment type="function">
    <text>Destroys radicals which are normally produced within the cells and which are toxic to biological systems.</text>
</comment>
<comment type="catalytic activity">
    <reaction>
        <text>2 superoxide + 2 H(+) = H2O2 + O2</text>
        <dbReference type="Rhea" id="RHEA:20696"/>
        <dbReference type="ChEBI" id="CHEBI:15378"/>
        <dbReference type="ChEBI" id="CHEBI:15379"/>
        <dbReference type="ChEBI" id="CHEBI:16240"/>
        <dbReference type="ChEBI" id="CHEBI:18421"/>
        <dbReference type="EC" id="1.15.1.1"/>
    </reaction>
</comment>
<comment type="cofactor">
    <cofactor evidence="1">
        <name>Cu cation</name>
        <dbReference type="ChEBI" id="CHEBI:23378"/>
    </cofactor>
    <text evidence="1">Binds 1 copper ion per subunit.</text>
</comment>
<comment type="cofactor">
    <cofactor evidence="1">
        <name>Zn(2+)</name>
        <dbReference type="ChEBI" id="CHEBI:29105"/>
    </cofactor>
    <text evidence="1">Binds 1 zinc ion per subunit.</text>
</comment>
<comment type="subunit">
    <text>Homodimer.</text>
</comment>
<comment type="subcellular location">
    <subcellularLocation>
        <location>Cytoplasm</location>
    </subcellularLocation>
</comment>
<comment type="similarity">
    <text evidence="2">Belongs to the Cu-Zn superoxide dismutase family.</text>
</comment>
<evidence type="ECO:0000250" key="1"/>
<evidence type="ECO:0000305" key="2"/>
<organism>
    <name type="scientific">Aquarana catesbeiana</name>
    <name type="common">American bullfrog</name>
    <name type="synonym">Rana catesbeiana</name>
    <dbReference type="NCBI Taxonomy" id="8400"/>
    <lineage>
        <taxon>Eukaryota</taxon>
        <taxon>Metazoa</taxon>
        <taxon>Chordata</taxon>
        <taxon>Craniata</taxon>
        <taxon>Vertebrata</taxon>
        <taxon>Euteleostomi</taxon>
        <taxon>Amphibia</taxon>
        <taxon>Batrachia</taxon>
        <taxon>Anura</taxon>
        <taxon>Neobatrachia</taxon>
        <taxon>Ranoidea</taxon>
        <taxon>Ranidae</taxon>
        <taxon>Aquarana</taxon>
    </lineage>
</organism>
<accession>P23417</accession>